<gene>
    <name type="primary">RPL27</name>
</gene>
<feature type="chain" id="PRO_0000126086" description="Large ribosomal subunit protein eL27">
    <location>
        <begin position="1"/>
        <end position="135"/>
    </location>
</feature>
<feature type="sequence variant" description="In RPL27-5.">
    <original>E</original>
    <variation>D</variation>
    <location>
        <position position="35"/>
    </location>
</feature>
<feature type="sequence variant" description="In RPL27-3, RPL27-4 and RPL27-5.">
    <original>F</original>
    <variation>Y</variation>
    <location>
        <position position="49"/>
    </location>
</feature>
<feature type="sequence variant" description="In RPL27-4.">
    <original>P</original>
    <variation>S</variation>
    <location>
        <position position="50"/>
    </location>
</feature>
<feature type="sequence variant" description="In RPL27-2 and RPL27-4.">
    <original>L</original>
    <variation>V</variation>
    <location>
        <position position="117"/>
    </location>
</feature>
<reference key="1">
    <citation type="journal article" date="1992" name="Plant Physiol.">
        <title>Expression of a ribosomal protein gene in axillary buds of pea.</title>
        <authorList>
            <person name="Stafstrom J.P."/>
            <person name="Sussex I.M."/>
        </authorList>
    </citation>
    <scope>NUCLEOTIDE SEQUENCE [MRNA]</scope>
    <source>
        <tissue>Seed</tissue>
    </source>
</reference>
<reference key="2">
    <citation type="journal article" date="1995" name="Plant Physiol.">
        <title>Nucleotide sequence of four ribosomal protein L27 cDNAs from growing axillary buds of pea.</title>
        <authorList>
            <person name="Stafstrom J.P."/>
            <person name="Devitt M.L."/>
        </authorList>
    </citation>
    <scope>NUCLEOTIDE SEQUENCE [MRNA]</scope>
    <source>
        <strain>cv. Alaska</strain>
    </source>
</reference>
<comment type="similarity">
    <text evidence="1">Belongs to the eukaryotic ribosomal protein eL27 family.</text>
</comment>
<dbReference type="EMBL" id="X70702">
    <property type="protein sequence ID" value="CAA50035.1"/>
    <property type="molecule type" value="mRNA"/>
</dbReference>
<dbReference type="EMBL" id="U10043">
    <property type="protein sequence ID" value="AAA86949.1"/>
    <property type="molecule type" value="mRNA"/>
</dbReference>
<dbReference type="EMBL" id="U10044">
    <property type="protein sequence ID" value="AAA86950.1"/>
    <property type="molecule type" value="mRNA"/>
</dbReference>
<dbReference type="EMBL" id="U10045">
    <property type="protein sequence ID" value="AAA86951.1"/>
    <property type="molecule type" value="mRNA"/>
</dbReference>
<dbReference type="EMBL" id="U10046">
    <property type="protein sequence ID" value="AAA86952.1"/>
    <property type="molecule type" value="mRNA"/>
</dbReference>
<dbReference type="PIR" id="T06426">
    <property type="entry name" value="T06426"/>
</dbReference>
<dbReference type="PIR" id="T06430">
    <property type="entry name" value="T06430"/>
</dbReference>
<dbReference type="PIR" id="T06431">
    <property type="entry name" value="T06431"/>
</dbReference>
<dbReference type="PIR" id="T06451">
    <property type="entry name" value="T06451"/>
</dbReference>
<dbReference type="SMR" id="Q05462"/>
<dbReference type="EnsemblPlants" id="Psat5g299640.1">
    <property type="protein sequence ID" value="Psat5g299640.1.cds1"/>
    <property type="gene ID" value="Psat5g299640"/>
</dbReference>
<dbReference type="Gramene" id="Psat5g299640.1">
    <property type="protein sequence ID" value="Psat5g299640.1.cds1"/>
    <property type="gene ID" value="Psat5g299640"/>
</dbReference>
<dbReference type="OrthoDB" id="1389615at2759"/>
<dbReference type="GO" id="GO:1990904">
    <property type="term" value="C:ribonucleoprotein complex"/>
    <property type="evidence" value="ECO:0007669"/>
    <property type="project" value="UniProtKB-KW"/>
</dbReference>
<dbReference type="GO" id="GO:0005840">
    <property type="term" value="C:ribosome"/>
    <property type="evidence" value="ECO:0007669"/>
    <property type="project" value="UniProtKB-KW"/>
</dbReference>
<dbReference type="GO" id="GO:0003735">
    <property type="term" value="F:structural constituent of ribosome"/>
    <property type="evidence" value="ECO:0007669"/>
    <property type="project" value="InterPro"/>
</dbReference>
<dbReference type="GO" id="GO:0006412">
    <property type="term" value="P:translation"/>
    <property type="evidence" value="ECO:0007669"/>
    <property type="project" value="InterPro"/>
</dbReference>
<dbReference type="CDD" id="cd06090">
    <property type="entry name" value="KOW_RPL27"/>
    <property type="match status" value="1"/>
</dbReference>
<dbReference type="FunFam" id="2.30.30.770:FF:000001">
    <property type="entry name" value="60S ribosomal protein L27"/>
    <property type="match status" value="1"/>
</dbReference>
<dbReference type="Gene3D" id="2.30.30.770">
    <property type="match status" value="1"/>
</dbReference>
<dbReference type="InterPro" id="IPR001141">
    <property type="entry name" value="Ribosomal_eL27"/>
</dbReference>
<dbReference type="InterPro" id="IPR018262">
    <property type="entry name" value="Ribosomal_eL27_CS"/>
</dbReference>
<dbReference type="InterPro" id="IPR041991">
    <property type="entry name" value="Ribosomal_eL27_KOW"/>
</dbReference>
<dbReference type="InterPro" id="IPR038655">
    <property type="entry name" value="Ribosomal_eL27_sf"/>
</dbReference>
<dbReference type="InterPro" id="IPR008991">
    <property type="entry name" value="Translation_prot_SH3-like_sf"/>
</dbReference>
<dbReference type="PANTHER" id="PTHR10497">
    <property type="entry name" value="60S RIBOSOMAL PROTEIN L27"/>
    <property type="match status" value="1"/>
</dbReference>
<dbReference type="Pfam" id="PF01777">
    <property type="entry name" value="Ribosomal_L27e"/>
    <property type="match status" value="1"/>
</dbReference>
<dbReference type="SUPFAM" id="SSF50104">
    <property type="entry name" value="Translation proteins SH3-like domain"/>
    <property type="match status" value="1"/>
</dbReference>
<dbReference type="PROSITE" id="PS01107">
    <property type="entry name" value="RIBOSOMAL_L27E"/>
    <property type="match status" value="1"/>
</dbReference>
<protein>
    <recommendedName>
        <fullName evidence="1">Large ribosomal subunit protein eL27</fullName>
    </recommendedName>
    <alternativeName>
        <fullName>60S ribosomal protein L27</fullName>
    </alternativeName>
</protein>
<sequence>MVKFLKPNKAVILLQGRYAGKKAVIVKTFDDGTREKPYGHCLVAGIKKFPSKVIKKDSAKKTAKKSRVKAFVKLVNYQHLMPTRYTLDVDLKDAVVPDVLQSKDKKVTALKETKKSLEERFKTGKNRWFFTKLRF</sequence>
<proteinExistence type="evidence at transcript level"/>
<keyword id="KW-0687">Ribonucleoprotein</keyword>
<keyword id="KW-0689">Ribosomal protein</keyword>
<evidence type="ECO:0000305" key="1"/>
<accession>Q05462</accession>
<name>RL27_PEA</name>
<organism>
    <name type="scientific">Pisum sativum</name>
    <name type="common">Garden pea</name>
    <name type="synonym">Lathyrus oleraceus</name>
    <dbReference type="NCBI Taxonomy" id="3888"/>
    <lineage>
        <taxon>Eukaryota</taxon>
        <taxon>Viridiplantae</taxon>
        <taxon>Streptophyta</taxon>
        <taxon>Embryophyta</taxon>
        <taxon>Tracheophyta</taxon>
        <taxon>Spermatophyta</taxon>
        <taxon>Magnoliopsida</taxon>
        <taxon>eudicotyledons</taxon>
        <taxon>Gunneridae</taxon>
        <taxon>Pentapetalae</taxon>
        <taxon>rosids</taxon>
        <taxon>fabids</taxon>
        <taxon>Fabales</taxon>
        <taxon>Fabaceae</taxon>
        <taxon>Papilionoideae</taxon>
        <taxon>50 kb inversion clade</taxon>
        <taxon>NPAAA clade</taxon>
        <taxon>Hologalegina</taxon>
        <taxon>IRL clade</taxon>
        <taxon>Fabeae</taxon>
        <taxon>Pisum</taxon>
    </lineage>
</organism>